<comment type="catalytic activity">
    <reaction>
        <text>L-seryl-[protein] + ATP = O-phospho-L-seryl-[protein] + ADP + H(+)</text>
        <dbReference type="Rhea" id="RHEA:17989"/>
        <dbReference type="Rhea" id="RHEA-COMP:9863"/>
        <dbReference type="Rhea" id="RHEA-COMP:11604"/>
        <dbReference type="ChEBI" id="CHEBI:15378"/>
        <dbReference type="ChEBI" id="CHEBI:29999"/>
        <dbReference type="ChEBI" id="CHEBI:30616"/>
        <dbReference type="ChEBI" id="CHEBI:83421"/>
        <dbReference type="ChEBI" id="CHEBI:456216"/>
        <dbReference type="EC" id="2.7.11.1"/>
    </reaction>
</comment>
<comment type="catalytic activity">
    <reaction>
        <text>L-threonyl-[protein] + ATP = O-phospho-L-threonyl-[protein] + ADP + H(+)</text>
        <dbReference type="Rhea" id="RHEA:46608"/>
        <dbReference type="Rhea" id="RHEA-COMP:11060"/>
        <dbReference type="Rhea" id="RHEA-COMP:11605"/>
        <dbReference type="ChEBI" id="CHEBI:15378"/>
        <dbReference type="ChEBI" id="CHEBI:30013"/>
        <dbReference type="ChEBI" id="CHEBI:30616"/>
        <dbReference type="ChEBI" id="CHEBI:61977"/>
        <dbReference type="ChEBI" id="CHEBI:456216"/>
        <dbReference type="EC" id="2.7.11.1"/>
    </reaction>
</comment>
<comment type="interaction">
    <interactant intactId="EBI-20651261">
        <id>Q9SHI2</id>
    </interactant>
    <interactant intactId="EBI-16954597">
        <id>C0LGE0</id>
        <label>At1g07650</label>
    </interactant>
    <organismsDiffer>false</organismsDiffer>
    <experiments>3</experiments>
</comment>
<comment type="interaction">
    <interactant intactId="EBI-20651261">
        <id>Q9SHI2</id>
    </interactant>
    <interactant intactId="EBI-20652666">
        <id>C0LGJ1</id>
        <label>At1g74360</label>
    </interactant>
    <organismsDiffer>false</organismsDiffer>
    <experiments>3</experiments>
</comment>
<comment type="interaction">
    <interactant intactId="EBI-20651261">
        <id>Q9SHI2</id>
    </interactant>
    <interactant intactId="EBI-16965118">
        <id>C0LGK9</id>
        <label>At2g24230</label>
    </interactant>
    <organismsDiffer>false</organismsDiffer>
    <experiments>3</experiments>
</comment>
<comment type="interaction">
    <interactant intactId="EBI-20651261">
        <id>Q9SHI2</id>
    </interactant>
    <interactant intactId="EBI-17123993">
        <id>Q9LT96</id>
        <label>At5g49770</label>
    </interactant>
    <organismsDiffer>false</organismsDiffer>
    <experiments>3</experiments>
</comment>
<comment type="interaction">
    <interactant intactId="EBI-20651261">
        <id>Q9SHI2</id>
    </interactant>
    <interactant intactId="EBI-2292728">
        <id>Q9ZPS9</id>
        <label>BRL2</label>
    </interactant>
    <organismsDiffer>false</organismsDiffer>
    <experiments>4</experiments>
</comment>
<comment type="interaction">
    <interactant intactId="EBI-20651261">
        <id>Q9SHI2</id>
    </interactant>
    <interactant intactId="EBI-16896366">
        <id>C0LGF4</id>
        <label>FEI1</label>
    </interactant>
    <organismsDiffer>false</organismsDiffer>
    <experiments>2</experiments>
</comment>
<comment type="interaction">
    <interactant intactId="EBI-20651261">
        <id>Q9SHI2</id>
    </interactant>
    <interactant intactId="EBI-20652801">
        <id>C0LGN2</id>
        <label>LRR-RLK</label>
    </interactant>
    <organismsDiffer>false</organismsDiffer>
    <experiments>3</experiments>
</comment>
<comment type="interaction">
    <interactant intactId="EBI-20651261">
        <id>Q9SHI2</id>
    </interactant>
    <interactant intactId="EBI-2023970">
        <id>P43298</id>
        <label>TMK1</label>
    </interactant>
    <organismsDiffer>false</organismsDiffer>
    <experiments>3</experiments>
</comment>
<comment type="interaction">
    <interactant intactId="EBI-20651261">
        <id>Q9SHI2</id>
    </interactant>
    <interactant intactId="EBI-20652836">
        <id>Q9FYK0</id>
        <label>TMK2</label>
    </interactant>
    <organismsDiffer>false</organismsDiffer>
    <experiments>4</experiments>
</comment>
<comment type="interaction">
    <interactant intactId="EBI-20651261">
        <id>Q9SHI2</id>
    </interactant>
    <interactant intactId="EBI-16896864">
        <id>Q9SIT1</id>
        <label>TMK3</label>
    </interactant>
    <organismsDiffer>false</organismsDiffer>
    <experiments>4</experiments>
</comment>
<comment type="subcellular location">
    <subcellularLocation>
        <location evidence="1">Cell membrane</location>
        <topology evidence="1">Single-pass type I membrane protein</topology>
    </subcellularLocation>
</comment>
<comment type="similarity">
    <text evidence="6">Belongs to the protein kinase superfamily. Ser/Thr protein kinase family.</text>
</comment>
<comment type="sequence caution" evidence="9">
    <conflict type="erroneous initiation">
        <sequence resource="EMBL-CDS" id="BAC43119"/>
    </conflict>
    <text>Truncated N-terminus.</text>
</comment>
<comment type="sequence caution" evidence="9">
    <conflict type="frameshift">
        <sequence resource="EMBL-CDS" id="BAC43119"/>
    </conflict>
</comment>
<comment type="sequence caution" evidence="9">
    <conflict type="miscellaneous discrepancy">
        <sequence resource="EMBL-CDS" id="BAC43119"/>
    </conflict>
    <text>Intron retention.</text>
</comment>
<evidence type="ECO:0000250" key="1"/>
<evidence type="ECO:0000250" key="2">
    <source>
        <dbReference type="UniProtKB" id="C0LGT6"/>
    </source>
</evidence>
<evidence type="ECO:0000250" key="3">
    <source>
        <dbReference type="UniProtKB" id="O22476"/>
    </source>
</evidence>
<evidence type="ECO:0000250" key="4">
    <source>
        <dbReference type="UniProtKB" id="Q9M0G7"/>
    </source>
</evidence>
<evidence type="ECO:0000255" key="5"/>
<evidence type="ECO:0000255" key="6">
    <source>
        <dbReference type="PROSITE-ProRule" id="PRU00159"/>
    </source>
</evidence>
<evidence type="ECO:0000255" key="7">
    <source>
        <dbReference type="PROSITE-ProRule" id="PRU10027"/>
    </source>
</evidence>
<evidence type="ECO:0000256" key="8">
    <source>
        <dbReference type="SAM" id="MobiDB-lite"/>
    </source>
</evidence>
<evidence type="ECO:0000305" key="9"/>
<gene>
    <name type="ordered locus">At1g17230</name>
    <name type="ORF">F20D23.7</name>
</gene>
<organism>
    <name type="scientific">Arabidopsis thaliana</name>
    <name type="common">Mouse-ear cress</name>
    <dbReference type="NCBI Taxonomy" id="3702"/>
    <lineage>
        <taxon>Eukaryota</taxon>
        <taxon>Viridiplantae</taxon>
        <taxon>Streptophyta</taxon>
        <taxon>Embryophyta</taxon>
        <taxon>Tracheophyta</taxon>
        <taxon>Spermatophyta</taxon>
        <taxon>Magnoliopsida</taxon>
        <taxon>eudicotyledons</taxon>
        <taxon>Gunneridae</taxon>
        <taxon>Pentapetalae</taxon>
        <taxon>rosids</taxon>
        <taxon>malvids</taxon>
        <taxon>Brassicales</taxon>
        <taxon>Brassicaceae</taxon>
        <taxon>Camelineae</taxon>
        <taxon>Arabidopsis</taxon>
    </lineage>
</organism>
<feature type="signal peptide" evidence="5">
    <location>
        <begin position="1"/>
        <end position="23"/>
    </location>
</feature>
<feature type="chain" id="PRO_0000403348" description="Leucine-rich repeat receptor-like serine/threonine-protein kinase At1g17230">
    <location>
        <begin position="24"/>
        <end position="1101"/>
    </location>
</feature>
<feature type="topological domain" description="Extracellular" evidence="5">
    <location>
        <begin position="24"/>
        <end position="734"/>
    </location>
</feature>
<feature type="transmembrane region" description="Helical" evidence="5">
    <location>
        <begin position="735"/>
        <end position="755"/>
    </location>
</feature>
<feature type="topological domain" description="Cytoplasmic" evidence="5">
    <location>
        <begin position="756"/>
        <end position="1101"/>
    </location>
</feature>
<feature type="repeat" description="LRR 1">
    <location>
        <begin position="66"/>
        <end position="90"/>
    </location>
</feature>
<feature type="repeat" description="LRR 2">
    <location>
        <begin position="91"/>
        <end position="115"/>
    </location>
</feature>
<feature type="repeat" description="LRR 3">
    <location>
        <begin position="117"/>
        <end position="137"/>
    </location>
</feature>
<feature type="repeat" description="LRR 4">
    <location>
        <begin position="138"/>
        <end position="162"/>
    </location>
</feature>
<feature type="repeat" description="LRR 5">
    <location>
        <begin position="163"/>
        <end position="186"/>
    </location>
</feature>
<feature type="repeat" description="LRR 6">
    <location>
        <begin position="188"/>
        <end position="210"/>
    </location>
</feature>
<feature type="repeat" description="LRR 7">
    <location>
        <begin position="211"/>
        <end position="234"/>
    </location>
</feature>
<feature type="repeat" description="LRR 8">
    <location>
        <begin position="235"/>
        <end position="258"/>
    </location>
</feature>
<feature type="repeat" description="LRR 9">
    <location>
        <begin position="260"/>
        <end position="282"/>
    </location>
</feature>
<feature type="repeat" description="LRR 10">
    <location>
        <begin position="283"/>
        <end position="306"/>
    </location>
</feature>
<feature type="repeat" description="LRR 11">
    <location>
        <begin position="308"/>
        <end position="329"/>
    </location>
</feature>
<feature type="repeat" description="LRR 12">
    <location>
        <begin position="330"/>
        <end position="354"/>
    </location>
</feature>
<feature type="repeat" description="LRR 13">
    <location>
        <begin position="355"/>
        <end position="379"/>
    </location>
</feature>
<feature type="repeat" description="LRR 14">
    <location>
        <begin position="381"/>
        <end position="402"/>
    </location>
</feature>
<feature type="repeat" description="LRR 15">
    <location>
        <begin position="403"/>
        <end position="426"/>
    </location>
</feature>
<feature type="repeat" description="LRR 16">
    <location>
        <begin position="427"/>
        <end position="450"/>
    </location>
</feature>
<feature type="repeat" description="LRR 17">
    <location>
        <begin position="451"/>
        <end position="474"/>
    </location>
</feature>
<feature type="repeat" description="LRR 18">
    <location>
        <begin position="476"/>
        <end position="498"/>
    </location>
</feature>
<feature type="repeat" description="LRR 19">
    <location>
        <begin position="499"/>
        <end position="522"/>
    </location>
</feature>
<feature type="repeat" description="LRR 20">
    <location>
        <begin position="524"/>
        <end position="546"/>
    </location>
</feature>
<feature type="repeat" description="LRR 21">
    <location>
        <begin position="548"/>
        <end position="569"/>
    </location>
</feature>
<feature type="repeat" description="LRR 22">
    <location>
        <begin position="570"/>
        <end position="593"/>
    </location>
</feature>
<feature type="repeat" description="LRR 23">
    <location>
        <begin position="595"/>
        <end position="618"/>
    </location>
</feature>
<feature type="repeat" description="LRR 24">
    <location>
        <begin position="619"/>
        <end position="643"/>
    </location>
</feature>
<feature type="repeat" description="LRR 25">
    <location>
        <begin position="644"/>
        <end position="667"/>
    </location>
</feature>
<feature type="repeat" description="LRR 26">
    <location>
        <begin position="669"/>
        <end position="692"/>
    </location>
</feature>
<feature type="domain" description="Protein kinase" evidence="6">
    <location>
        <begin position="799"/>
        <end position="1081"/>
    </location>
</feature>
<feature type="region of interest" description="Disordered" evidence="8">
    <location>
        <begin position="1076"/>
        <end position="1101"/>
    </location>
</feature>
<feature type="compositionally biased region" description="Low complexity" evidence="8">
    <location>
        <begin position="1078"/>
        <end position="1088"/>
    </location>
</feature>
<feature type="active site" description="Proton acceptor" evidence="6 7">
    <location>
        <position position="926"/>
    </location>
</feature>
<feature type="binding site" evidence="6">
    <location>
        <begin position="805"/>
        <end position="813"/>
    </location>
    <ligand>
        <name>ATP</name>
        <dbReference type="ChEBI" id="CHEBI:30616"/>
    </ligand>
</feature>
<feature type="binding site" evidence="6">
    <location>
        <position position="827"/>
    </location>
    <ligand>
        <name>ATP</name>
        <dbReference type="ChEBI" id="CHEBI:30616"/>
    </ligand>
</feature>
<feature type="modified residue" description="Phosphothreonine" evidence="3">
    <location>
        <position position="788"/>
    </location>
</feature>
<feature type="modified residue" description="Phosphothreonine" evidence="3">
    <location>
        <position position="796"/>
    </location>
</feature>
<feature type="modified residue" description="Phosphotyrosine" evidence="3">
    <location>
        <position position="874"/>
    </location>
</feature>
<feature type="modified residue" description="Phosphotyrosine" evidence="2">
    <location>
        <position position="913"/>
    </location>
</feature>
<feature type="modified residue" description="Phosphoserine" evidence="4">
    <location>
        <position position="960"/>
    </location>
</feature>
<feature type="modified residue" description="Phosphotyrosine" evidence="2">
    <location>
        <position position="968"/>
    </location>
</feature>
<feature type="modified residue" description="Phosphotyrosine" evidence="4">
    <location>
        <position position="975"/>
    </location>
</feature>
<feature type="modified residue" description="Phosphothreonine" evidence="4">
    <location>
        <position position="976"/>
    </location>
</feature>
<feature type="glycosylation site" description="N-linked (GlcNAc...) asparagine" evidence="5">
    <location>
        <position position="39"/>
    </location>
</feature>
<feature type="glycosylation site" description="N-linked (GlcNAc...) asparagine" evidence="5">
    <location>
        <position position="57"/>
    </location>
</feature>
<feature type="glycosylation site" description="N-linked (GlcNAc...) asparagine" evidence="5">
    <location>
        <position position="78"/>
    </location>
</feature>
<feature type="glycosylation site" description="N-linked (GlcNAc...) asparagine" evidence="5">
    <location>
        <position position="97"/>
    </location>
</feature>
<feature type="glycosylation site" description="N-linked (GlcNAc...) asparagine" evidence="5">
    <location>
        <position position="161"/>
    </location>
</feature>
<feature type="glycosylation site" description="N-linked (GlcNAc...) asparagine" evidence="5">
    <location>
        <position position="174"/>
    </location>
</feature>
<feature type="glycosylation site" description="N-linked (GlcNAc...) asparagine" evidence="5">
    <location>
        <position position="236"/>
    </location>
</feature>
<feature type="glycosylation site" description="N-linked (GlcNAc...) asparagine" evidence="5">
    <location>
        <position position="257"/>
    </location>
</feature>
<feature type="glycosylation site" description="N-linked (GlcNAc...) asparagine" evidence="5">
    <location>
        <position position="368"/>
    </location>
</feature>
<feature type="glycosylation site" description="N-linked (GlcNAc...) asparagine" evidence="5">
    <location>
        <position position="404"/>
    </location>
</feature>
<feature type="glycosylation site" description="N-linked (GlcNAc...) asparagine" evidence="5">
    <location>
        <position position="476"/>
    </location>
</feature>
<feature type="glycosylation site" description="N-linked (GlcNAc...) asparagine" evidence="5">
    <location>
        <position position="490"/>
    </location>
</feature>
<feature type="glycosylation site" description="N-linked (GlcNAc...) asparagine" evidence="5">
    <location>
        <position position="510"/>
    </location>
</feature>
<feature type="glycosylation site" description="N-linked (GlcNAc...) asparagine" evidence="5">
    <location>
        <position position="521"/>
    </location>
</feature>
<feature type="glycosylation site" description="N-linked (GlcNAc...) asparagine" evidence="5">
    <location>
        <position position="529"/>
    </location>
</feature>
<feature type="glycosylation site" description="N-linked (GlcNAc...) asparagine" evidence="5">
    <location>
        <position position="626"/>
    </location>
</feature>
<feature type="glycosylation site" description="N-linked (GlcNAc...) asparagine" evidence="5">
    <location>
        <position position="631"/>
    </location>
</feature>
<feature type="glycosylation site" description="N-linked (GlcNAc...) asparagine" evidence="5">
    <location>
        <position position="674"/>
    </location>
</feature>
<feature type="glycosylation site" description="N-linked (GlcNAc...) asparagine" evidence="5">
    <location>
        <position position="728"/>
    </location>
</feature>
<reference key="1">
    <citation type="journal article" date="2000" name="Nature">
        <title>Sequence and analysis of chromosome 1 of the plant Arabidopsis thaliana.</title>
        <authorList>
            <person name="Theologis A."/>
            <person name="Ecker J.R."/>
            <person name="Palm C.J."/>
            <person name="Federspiel N.A."/>
            <person name="Kaul S."/>
            <person name="White O."/>
            <person name="Alonso J."/>
            <person name="Altafi H."/>
            <person name="Araujo R."/>
            <person name="Bowman C.L."/>
            <person name="Brooks S.Y."/>
            <person name="Buehler E."/>
            <person name="Chan A."/>
            <person name="Chao Q."/>
            <person name="Chen H."/>
            <person name="Cheuk R.F."/>
            <person name="Chin C.W."/>
            <person name="Chung M.K."/>
            <person name="Conn L."/>
            <person name="Conway A.B."/>
            <person name="Conway A.R."/>
            <person name="Creasy T.H."/>
            <person name="Dewar K."/>
            <person name="Dunn P."/>
            <person name="Etgu P."/>
            <person name="Feldblyum T.V."/>
            <person name="Feng J.-D."/>
            <person name="Fong B."/>
            <person name="Fujii C.Y."/>
            <person name="Gill J.E."/>
            <person name="Goldsmith A.D."/>
            <person name="Haas B."/>
            <person name="Hansen N.F."/>
            <person name="Hughes B."/>
            <person name="Huizar L."/>
            <person name="Hunter J.L."/>
            <person name="Jenkins J."/>
            <person name="Johnson-Hopson C."/>
            <person name="Khan S."/>
            <person name="Khaykin E."/>
            <person name="Kim C.J."/>
            <person name="Koo H.L."/>
            <person name="Kremenetskaia I."/>
            <person name="Kurtz D.B."/>
            <person name="Kwan A."/>
            <person name="Lam B."/>
            <person name="Langin-Hooper S."/>
            <person name="Lee A."/>
            <person name="Lee J.M."/>
            <person name="Lenz C.A."/>
            <person name="Li J.H."/>
            <person name="Li Y.-P."/>
            <person name="Lin X."/>
            <person name="Liu S.X."/>
            <person name="Liu Z.A."/>
            <person name="Luros J.S."/>
            <person name="Maiti R."/>
            <person name="Marziali A."/>
            <person name="Militscher J."/>
            <person name="Miranda M."/>
            <person name="Nguyen M."/>
            <person name="Nierman W.C."/>
            <person name="Osborne B.I."/>
            <person name="Pai G."/>
            <person name="Peterson J."/>
            <person name="Pham P.K."/>
            <person name="Rizzo M."/>
            <person name="Rooney T."/>
            <person name="Rowley D."/>
            <person name="Sakano H."/>
            <person name="Salzberg S.L."/>
            <person name="Schwartz J.R."/>
            <person name="Shinn P."/>
            <person name="Southwick A.M."/>
            <person name="Sun H."/>
            <person name="Tallon L.J."/>
            <person name="Tambunga G."/>
            <person name="Toriumi M.J."/>
            <person name="Town C.D."/>
            <person name="Utterback T."/>
            <person name="Van Aken S."/>
            <person name="Vaysberg M."/>
            <person name="Vysotskaia V.S."/>
            <person name="Walker M."/>
            <person name="Wu D."/>
            <person name="Yu G."/>
            <person name="Fraser C.M."/>
            <person name="Venter J.C."/>
            <person name="Davis R.W."/>
        </authorList>
    </citation>
    <scope>NUCLEOTIDE SEQUENCE [LARGE SCALE GENOMIC DNA]</scope>
    <source>
        <strain>cv. Columbia</strain>
    </source>
</reference>
<reference key="2">
    <citation type="journal article" date="2017" name="Plant J.">
        <title>Araport11: a complete reannotation of the Arabidopsis thaliana reference genome.</title>
        <authorList>
            <person name="Cheng C.Y."/>
            <person name="Krishnakumar V."/>
            <person name="Chan A.P."/>
            <person name="Thibaud-Nissen F."/>
            <person name="Schobel S."/>
            <person name="Town C.D."/>
        </authorList>
    </citation>
    <scope>GENOME REANNOTATION</scope>
    <source>
        <strain>cv. Columbia</strain>
    </source>
</reference>
<reference key="3">
    <citation type="journal article" date="2002" name="Science">
        <title>Functional annotation of a full-length Arabidopsis cDNA collection.</title>
        <authorList>
            <person name="Seki M."/>
            <person name="Narusaka M."/>
            <person name="Kamiya A."/>
            <person name="Ishida J."/>
            <person name="Satou M."/>
            <person name="Sakurai T."/>
            <person name="Nakajima M."/>
            <person name="Enju A."/>
            <person name="Akiyama K."/>
            <person name="Oono Y."/>
            <person name="Muramatsu M."/>
            <person name="Hayashizaki Y."/>
            <person name="Kawai J."/>
            <person name="Carninci P."/>
            <person name="Itoh M."/>
            <person name="Ishii Y."/>
            <person name="Arakawa T."/>
            <person name="Shibata K."/>
            <person name="Shinagawa A."/>
            <person name="Shinozaki K."/>
        </authorList>
    </citation>
    <scope>NUCLEOTIDE SEQUENCE [LARGE SCALE MRNA] OF 213-1101</scope>
    <source>
        <strain>cv. Columbia</strain>
    </source>
</reference>
<sequence>MRGRICFLAIVILCSFSFILVRSLNEEGRVLLEFKAFLNDSNGYLASWNQLDSNPCNWTGIACTHLRTVTSVDLNGMNLSGTLSPLICKLHGLRKLNVSTNFISGPIPQDLSLCRSLEVLDLCTNRFHGVIPIQLTMIITLKKLYLCENYLFGSIPRQIGNLSSLQELVIYSNNLTGVIPPSMAKLRQLRIIRAGRNGFSGVIPSEISGCESLKVLGLAENLLEGSLPKQLEKLQNLTDLILWQNRLSGEIPPSVGNISRLEVLALHENYFTGSIPREIGKLTKMKRLYLYTNQLTGEIPREIGNLIDAAEIDFSENQLTGFIPKEFGHILNLKLLHLFENILLGPIPRELGELTLLEKLDLSINRLNGTIPQELQFLPYLVDLQLFDNQLEGKIPPLIGFYSNFSVLDMSANSLSGPIPAHFCRFQTLILLSLGSNKLSGNIPRDLKTCKSLTKLMLGDNQLTGSLPIELFNLQNLTALELHQNWLSGNISADLGKLKNLERLRLANNNFTGEIPPEIGNLTKIVGFNISSNQLTGHIPKELGSCVTIQRLDLSGNKFSGYIAQELGQLVYLEILRLSDNRLTGEIPHSFGDLTRLMELQLGGNLLSENIPVELGKLTSLQISLNISHNNLSGTIPDSLGNLQMLEILYLNDNKLSGEIPASIGNLMSLLICNISNNNLVGTVPDTAVFQRMDSSNFAGNHGLCNSQRSHCQPLVPHSDSKLNWLINGSQRQKILTITCIVIGSVFLITFLGLCWTIKRREPAFVALEDQTKPDVMDSYYFPKKGFTYQGLVDATRNFSEDVVLGRGACGTVYKAEMSGGEVIAVKKLNSRGEGASSDNSFRAEISTLGKIRHRNIVKLYGFCYHQNSNLLLYEYMSKGSLGEQLQRGEKNCLLDWNARYRIALGAAEGLCYLHHDCRPQIVHRDIKSNNILLDERFQAHVGDFGLAKLIDLSYSKSMSAVAGSYGYIAPEYAYTMKVTEKCDIYSFGVVLLELITGKPPVQPLEQGGDLVNWVRRSIRNMIPTIEMFDARLDTNDKRTVHEMSLVLKIALFCTSNSPASRPTMREVVAMITEARGSSSLSSSSITSETPLEEANSSKEI</sequence>
<proteinExistence type="evidence at protein level"/>
<accession>Q9SHI2</accession>
<accession>Q8GX06</accession>
<dbReference type="EC" id="2.7.11.1"/>
<dbReference type="EMBL" id="AC007651">
    <property type="protein sequence ID" value="AAD50027.1"/>
    <property type="molecule type" value="Genomic_DNA"/>
</dbReference>
<dbReference type="EMBL" id="CP002684">
    <property type="protein sequence ID" value="AEE29561.1"/>
    <property type="molecule type" value="Genomic_DNA"/>
</dbReference>
<dbReference type="EMBL" id="AK118516">
    <property type="protein sequence ID" value="BAC43119.1"/>
    <property type="status" value="ALT_SEQ"/>
    <property type="molecule type" value="mRNA"/>
</dbReference>
<dbReference type="PIR" id="E86308">
    <property type="entry name" value="E86308"/>
</dbReference>
<dbReference type="RefSeq" id="NP_001322898.1">
    <property type="nucleotide sequence ID" value="NM_001332283.1"/>
</dbReference>
<dbReference type="RefSeq" id="NP_173166.2">
    <property type="nucleotide sequence ID" value="NM_101584.4"/>
</dbReference>
<dbReference type="SMR" id="Q9SHI2"/>
<dbReference type="BioGRID" id="23534">
    <property type="interactions" value="14"/>
</dbReference>
<dbReference type="FunCoup" id="Q9SHI2">
    <property type="interactions" value="44"/>
</dbReference>
<dbReference type="IntAct" id="Q9SHI2">
    <property type="interactions" value="24"/>
</dbReference>
<dbReference type="STRING" id="3702.Q9SHI2"/>
<dbReference type="GlyGen" id="Q9SHI2">
    <property type="glycosylation" value="19 sites"/>
</dbReference>
<dbReference type="PaxDb" id="3702-AT1G17230.1"/>
<dbReference type="ProteomicsDB" id="242444"/>
<dbReference type="EnsemblPlants" id="AT1G17230.1">
    <property type="protein sequence ID" value="AT1G17230.1"/>
    <property type="gene ID" value="AT1G17230"/>
</dbReference>
<dbReference type="GeneID" id="838294"/>
<dbReference type="Gramene" id="AT1G17230.1">
    <property type="protein sequence ID" value="AT1G17230.1"/>
    <property type="gene ID" value="AT1G17230"/>
</dbReference>
<dbReference type="KEGG" id="ath:AT1G17230"/>
<dbReference type="Araport" id="AT1G17230"/>
<dbReference type="TAIR" id="AT1G17230"/>
<dbReference type="eggNOG" id="ENOG502QPT1">
    <property type="taxonomic scope" value="Eukaryota"/>
</dbReference>
<dbReference type="HOGENOM" id="CLU_000288_22_1_1"/>
<dbReference type="InParanoid" id="Q9SHI2"/>
<dbReference type="PhylomeDB" id="Q9SHI2"/>
<dbReference type="PRO" id="PR:Q9SHI2"/>
<dbReference type="Proteomes" id="UP000006548">
    <property type="component" value="Chromosome 1"/>
</dbReference>
<dbReference type="ExpressionAtlas" id="Q9SHI2">
    <property type="expression patterns" value="baseline and differential"/>
</dbReference>
<dbReference type="GO" id="GO:0005886">
    <property type="term" value="C:plasma membrane"/>
    <property type="evidence" value="ECO:0007669"/>
    <property type="project" value="UniProtKB-SubCell"/>
</dbReference>
<dbReference type="GO" id="GO:0005524">
    <property type="term" value="F:ATP binding"/>
    <property type="evidence" value="ECO:0007669"/>
    <property type="project" value="UniProtKB-KW"/>
</dbReference>
<dbReference type="GO" id="GO:0106310">
    <property type="term" value="F:protein serine kinase activity"/>
    <property type="evidence" value="ECO:0007669"/>
    <property type="project" value="RHEA"/>
</dbReference>
<dbReference type="GO" id="GO:0004674">
    <property type="term" value="F:protein serine/threonine kinase activity"/>
    <property type="evidence" value="ECO:0007669"/>
    <property type="project" value="UniProtKB-KW"/>
</dbReference>
<dbReference type="FunFam" id="3.80.10.10:FF:000430">
    <property type="entry name" value="Leucine-rich repeat receptor-like protein kinase PEPR1"/>
    <property type="match status" value="1"/>
</dbReference>
<dbReference type="FunFam" id="3.30.200.20:FF:000219">
    <property type="entry name" value="Leucine-rich repeat receptor-like serine/threonine-protein kinase"/>
    <property type="match status" value="1"/>
</dbReference>
<dbReference type="FunFam" id="1.10.510.10:FF:000365">
    <property type="entry name" value="Leucine-rich repeat receptor-like serine/threonine-protein kinase At1g17230"/>
    <property type="match status" value="1"/>
</dbReference>
<dbReference type="FunFam" id="3.80.10.10:FF:000177">
    <property type="entry name" value="Leucine-rich repeat receptor-like serine/threonine-protein kinase At1g17230"/>
    <property type="match status" value="1"/>
</dbReference>
<dbReference type="FunFam" id="3.80.10.10:FF:001314">
    <property type="entry name" value="Leucine-rich repeat receptor-like serine/threonine-protein kinase At1g17230"/>
    <property type="match status" value="1"/>
</dbReference>
<dbReference type="FunFam" id="3.80.10.10:FF:000041">
    <property type="entry name" value="LRR receptor-like serine/threonine-protein kinase ERECTA"/>
    <property type="match status" value="1"/>
</dbReference>
<dbReference type="Gene3D" id="3.30.200.20">
    <property type="entry name" value="Phosphorylase Kinase, domain 1"/>
    <property type="match status" value="1"/>
</dbReference>
<dbReference type="Gene3D" id="3.80.10.10">
    <property type="entry name" value="Ribonuclease Inhibitor"/>
    <property type="match status" value="3"/>
</dbReference>
<dbReference type="Gene3D" id="1.10.510.10">
    <property type="entry name" value="Transferase(Phosphotransferase) domain 1"/>
    <property type="match status" value="1"/>
</dbReference>
<dbReference type="InterPro" id="IPR011009">
    <property type="entry name" value="Kinase-like_dom_sf"/>
</dbReference>
<dbReference type="InterPro" id="IPR001611">
    <property type="entry name" value="Leu-rich_rpt"/>
</dbReference>
<dbReference type="InterPro" id="IPR003591">
    <property type="entry name" value="Leu-rich_rpt_typical-subtyp"/>
</dbReference>
<dbReference type="InterPro" id="IPR032675">
    <property type="entry name" value="LRR_dom_sf"/>
</dbReference>
<dbReference type="InterPro" id="IPR013210">
    <property type="entry name" value="LRR_N_plant-typ"/>
</dbReference>
<dbReference type="InterPro" id="IPR000719">
    <property type="entry name" value="Prot_kinase_dom"/>
</dbReference>
<dbReference type="InterPro" id="IPR008271">
    <property type="entry name" value="Ser/Thr_kinase_AS"/>
</dbReference>
<dbReference type="InterPro" id="IPR051420">
    <property type="entry name" value="Ser_Thr_Kinases_DiverseReg"/>
</dbReference>
<dbReference type="PANTHER" id="PTHR48005">
    <property type="entry name" value="LEUCINE RICH REPEAT KINASE 2"/>
    <property type="match status" value="1"/>
</dbReference>
<dbReference type="PANTHER" id="PTHR48005:SF80">
    <property type="entry name" value="LEUCINE-RICH REPEAT RECEPTOR-LIKE SERINE_THREONINE-PROTEIN KINASE"/>
    <property type="match status" value="1"/>
</dbReference>
<dbReference type="Pfam" id="PF00560">
    <property type="entry name" value="LRR_1"/>
    <property type="match status" value="6"/>
</dbReference>
<dbReference type="Pfam" id="PF13855">
    <property type="entry name" value="LRR_8"/>
    <property type="match status" value="2"/>
</dbReference>
<dbReference type="Pfam" id="PF08263">
    <property type="entry name" value="LRRNT_2"/>
    <property type="match status" value="1"/>
</dbReference>
<dbReference type="Pfam" id="PF00069">
    <property type="entry name" value="Pkinase"/>
    <property type="match status" value="1"/>
</dbReference>
<dbReference type="SMART" id="SM00369">
    <property type="entry name" value="LRR_TYP"/>
    <property type="match status" value="10"/>
</dbReference>
<dbReference type="SMART" id="SM00220">
    <property type="entry name" value="S_TKc"/>
    <property type="match status" value="1"/>
</dbReference>
<dbReference type="SUPFAM" id="SSF52058">
    <property type="entry name" value="L domain-like"/>
    <property type="match status" value="1"/>
</dbReference>
<dbReference type="SUPFAM" id="SSF56112">
    <property type="entry name" value="Protein kinase-like (PK-like)"/>
    <property type="match status" value="1"/>
</dbReference>
<dbReference type="SUPFAM" id="SSF52047">
    <property type="entry name" value="RNI-like"/>
    <property type="match status" value="1"/>
</dbReference>
<dbReference type="PROSITE" id="PS50011">
    <property type="entry name" value="PROTEIN_KINASE_DOM"/>
    <property type="match status" value="1"/>
</dbReference>
<dbReference type="PROSITE" id="PS00108">
    <property type="entry name" value="PROTEIN_KINASE_ST"/>
    <property type="match status" value="1"/>
</dbReference>
<keyword id="KW-0067">ATP-binding</keyword>
<keyword id="KW-1003">Cell membrane</keyword>
<keyword id="KW-0325">Glycoprotein</keyword>
<keyword id="KW-0418">Kinase</keyword>
<keyword id="KW-0433">Leucine-rich repeat</keyword>
<keyword id="KW-0472">Membrane</keyword>
<keyword id="KW-0547">Nucleotide-binding</keyword>
<keyword id="KW-0597">Phosphoprotein</keyword>
<keyword id="KW-0675">Receptor</keyword>
<keyword id="KW-1185">Reference proteome</keyword>
<keyword id="KW-0677">Repeat</keyword>
<keyword id="KW-0723">Serine/threonine-protein kinase</keyword>
<keyword id="KW-0732">Signal</keyword>
<keyword id="KW-0808">Transferase</keyword>
<keyword id="KW-0812">Transmembrane</keyword>
<keyword id="KW-1133">Transmembrane helix</keyword>
<protein>
    <recommendedName>
        <fullName>Leucine-rich repeat receptor-like serine/threonine-protein kinase At1g17230</fullName>
        <ecNumber>2.7.11.1</ecNumber>
    </recommendedName>
</protein>
<name>Y1723_ARATH</name>